<evidence type="ECO:0000255" key="1">
    <source>
        <dbReference type="HAMAP-Rule" id="MF_01342"/>
    </source>
</evidence>
<evidence type="ECO:0000305" key="2"/>
<feature type="chain" id="PRO_0000062199" description="Large ribosomal subunit protein uL16">
    <location>
        <begin position="1"/>
        <end position="136"/>
    </location>
</feature>
<comment type="function">
    <text evidence="1">Binds 23S rRNA and is also seen to make contacts with the A and possibly P site tRNAs.</text>
</comment>
<comment type="subunit">
    <text evidence="1">Part of the 50S ribosomal subunit.</text>
</comment>
<comment type="similarity">
    <text evidence="1">Belongs to the universal ribosomal protein uL16 family.</text>
</comment>
<name>RL16_SHISS</name>
<organism>
    <name type="scientific">Shigella sonnei (strain Ss046)</name>
    <dbReference type="NCBI Taxonomy" id="300269"/>
    <lineage>
        <taxon>Bacteria</taxon>
        <taxon>Pseudomonadati</taxon>
        <taxon>Pseudomonadota</taxon>
        <taxon>Gammaproteobacteria</taxon>
        <taxon>Enterobacterales</taxon>
        <taxon>Enterobacteriaceae</taxon>
        <taxon>Shigella</taxon>
    </lineage>
</organism>
<accession>Q3YWU6</accession>
<gene>
    <name evidence="1" type="primary">rplP</name>
    <name type="ordered locus">SSON_3454</name>
</gene>
<keyword id="KW-1185">Reference proteome</keyword>
<keyword id="KW-0687">Ribonucleoprotein</keyword>
<keyword id="KW-0689">Ribosomal protein</keyword>
<keyword id="KW-0694">RNA-binding</keyword>
<keyword id="KW-0699">rRNA-binding</keyword>
<keyword id="KW-0820">tRNA-binding</keyword>
<sequence>MLQPKRTKFRKMHKGRNRGLAQGTDVSFGSFGLKAVGRGRLTARQIEAARRAMTRAVKRQGKIWIRVFPDKPITEKPLAVRMGKGKGNVEYWVALIQPGKVLYEMDGVPEELAREAFKLAAAKLPIKTTFVTKTVM</sequence>
<protein>
    <recommendedName>
        <fullName evidence="1">Large ribosomal subunit protein uL16</fullName>
    </recommendedName>
    <alternativeName>
        <fullName evidence="2">50S ribosomal protein L16</fullName>
    </alternativeName>
</protein>
<reference key="1">
    <citation type="journal article" date="2005" name="Nucleic Acids Res.">
        <title>Genome dynamics and diversity of Shigella species, the etiologic agents of bacillary dysentery.</title>
        <authorList>
            <person name="Yang F."/>
            <person name="Yang J."/>
            <person name="Zhang X."/>
            <person name="Chen L."/>
            <person name="Jiang Y."/>
            <person name="Yan Y."/>
            <person name="Tang X."/>
            <person name="Wang J."/>
            <person name="Xiong Z."/>
            <person name="Dong J."/>
            <person name="Xue Y."/>
            <person name="Zhu Y."/>
            <person name="Xu X."/>
            <person name="Sun L."/>
            <person name="Chen S."/>
            <person name="Nie H."/>
            <person name="Peng J."/>
            <person name="Xu J."/>
            <person name="Wang Y."/>
            <person name="Yuan Z."/>
            <person name="Wen Y."/>
            <person name="Yao Z."/>
            <person name="Shen Y."/>
            <person name="Qiang B."/>
            <person name="Hou Y."/>
            <person name="Yu J."/>
            <person name="Jin Q."/>
        </authorList>
    </citation>
    <scope>NUCLEOTIDE SEQUENCE [LARGE SCALE GENOMIC DNA]</scope>
    <source>
        <strain>Ss046</strain>
    </source>
</reference>
<dbReference type="EMBL" id="CP000038">
    <property type="protein sequence ID" value="AAZ90016.1"/>
    <property type="molecule type" value="Genomic_DNA"/>
</dbReference>
<dbReference type="RefSeq" id="WP_000941212.1">
    <property type="nucleotide sequence ID" value="NC_007384.1"/>
</dbReference>
<dbReference type="SMR" id="Q3YWU6"/>
<dbReference type="GeneID" id="93778674"/>
<dbReference type="KEGG" id="ssn:SSON_3454"/>
<dbReference type="HOGENOM" id="CLU_078858_2_1_6"/>
<dbReference type="Proteomes" id="UP000002529">
    <property type="component" value="Chromosome"/>
</dbReference>
<dbReference type="GO" id="GO:0022625">
    <property type="term" value="C:cytosolic large ribosomal subunit"/>
    <property type="evidence" value="ECO:0007669"/>
    <property type="project" value="TreeGrafter"/>
</dbReference>
<dbReference type="GO" id="GO:0019843">
    <property type="term" value="F:rRNA binding"/>
    <property type="evidence" value="ECO:0007669"/>
    <property type="project" value="UniProtKB-UniRule"/>
</dbReference>
<dbReference type="GO" id="GO:0003735">
    <property type="term" value="F:structural constituent of ribosome"/>
    <property type="evidence" value="ECO:0007669"/>
    <property type="project" value="InterPro"/>
</dbReference>
<dbReference type="GO" id="GO:0000049">
    <property type="term" value="F:tRNA binding"/>
    <property type="evidence" value="ECO:0007669"/>
    <property type="project" value="UniProtKB-KW"/>
</dbReference>
<dbReference type="GO" id="GO:0006412">
    <property type="term" value="P:translation"/>
    <property type="evidence" value="ECO:0007669"/>
    <property type="project" value="UniProtKB-UniRule"/>
</dbReference>
<dbReference type="CDD" id="cd01433">
    <property type="entry name" value="Ribosomal_L16_L10e"/>
    <property type="match status" value="1"/>
</dbReference>
<dbReference type="FunFam" id="3.90.1170.10:FF:000001">
    <property type="entry name" value="50S ribosomal protein L16"/>
    <property type="match status" value="1"/>
</dbReference>
<dbReference type="Gene3D" id="3.90.1170.10">
    <property type="entry name" value="Ribosomal protein L10e/L16"/>
    <property type="match status" value="1"/>
</dbReference>
<dbReference type="HAMAP" id="MF_01342">
    <property type="entry name" value="Ribosomal_uL16"/>
    <property type="match status" value="1"/>
</dbReference>
<dbReference type="InterPro" id="IPR047873">
    <property type="entry name" value="Ribosomal_uL16"/>
</dbReference>
<dbReference type="InterPro" id="IPR000114">
    <property type="entry name" value="Ribosomal_uL16_bact-type"/>
</dbReference>
<dbReference type="InterPro" id="IPR020798">
    <property type="entry name" value="Ribosomal_uL16_CS"/>
</dbReference>
<dbReference type="InterPro" id="IPR016180">
    <property type="entry name" value="Ribosomal_uL16_dom"/>
</dbReference>
<dbReference type="InterPro" id="IPR036920">
    <property type="entry name" value="Ribosomal_uL16_sf"/>
</dbReference>
<dbReference type="NCBIfam" id="TIGR01164">
    <property type="entry name" value="rplP_bact"/>
    <property type="match status" value="1"/>
</dbReference>
<dbReference type="PANTHER" id="PTHR12220">
    <property type="entry name" value="50S/60S RIBOSOMAL PROTEIN L16"/>
    <property type="match status" value="1"/>
</dbReference>
<dbReference type="PANTHER" id="PTHR12220:SF13">
    <property type="entry name" value="LARGE RIBOSOMAL SUBUNIT PROTEIN UL16M"/>
    <property type="match status" value="1"/>
</dbReference>
<dbReference type="Pfam" id="PF00252">
    <property type="entry name" value="Ribosomal_L16"/>
    <property type="match status" value="1"/>
</dbReference>
<dbReference type="PRINTS" id="PR00060">
    <property type="entry name" value="RIBOSOMALL16"/>
</dbReference>
<dbReference type="SUPFAM" id="SSF54686">
    <property type="entry name" value="Ribosomal protein L16p/L10e"/>
    <property type="match status" value="1"/>
</dbReference>
<dbReference type="PROSITE" id="PS00586">
    <property type="entry name" value="RIBOSOMAL_L16_1"/>
    <property type="match status" value="1"/>
</dbReference>
<dbReference type="PROSITE" id="PS00701">
    <property type="entry name" value="RIBOSOMAL_L16_2"/>
    <property type="match status" value="1"/>
</dbReference>
<proteinExistence type="inferred from homology"/>